<protein>
    <recommendedName>
        <fullName>Acetolactate synthase, mitochondrial</fullName>
        <ecNumber>2.2.1.6</ecNumber>
    </recommendedName>
    <alternativeName>
        <fullName>AHAS</fullName>
    </alternativeName>
    <alternativeName>
        <fullName>ALS</fullName>
    </alternativeName>
    <alternativeName>
        <fullName>Acetohydroxy-acid synthase</fullName>
    </alternativeName>
</protein>
<keyword id="KW-0028">Amino-acid biosynthesis</keyword>
<keyword id="KW-0100">Branched-chain amino acid biosynthesis</keyword>
<keyword id="KW-0274">FAD</keyword>
<keyword id="KW-0285">Flavoprotein</keyword>
<keyword id="KW-0460">Magnesium</keyword>
<keyword id="KW-0479">Metal-binding</keyword>
<keyword id="KW-0496">Mitochondrion</keyword>
<keyword id="KW-0786">Thiamine pyrophosphate</keyword>
<keyword id="KW-0808">Transferase</keyword>
<keyword id="KW-0809">Transit peptide</keyword>
<proteinExistence type="inferred from homology"/>
<dbReference type="EC" id="2.2.1.6"/>
<dbReference type="EMBL" id="AY450850">
    <property type="protein sequence ID" value="AAR29084.1"/>
    <property type="molecule type" value="Genomic_DNA"/>
</dbReference>
<dbReference type="EMBL" id="CP003820">
    <property type="protein sequence ID" value="AFR92401.1"/>
    <property type="molecule type" value="Genomic_DNA"/>
</dbReference>
<dbReference type="RefSeq" id="XP_012046625.1">
    <property type="nucleotide sequence ID" value="XM_012191235.1"/>
</dbReference>
<dbReference type="SMR" id="Q6SSJ3"/>
<dbReference type="SwissPalm" id="Q6SSJ3"/>
<dbReference type="GeneID" id="23884092"/>
<dbReference type="KEGG" id="cng:CNAG_00268"/>
<dbReference type="VEuPathDB" id="FungiDB:CNAG_00268"/>
<dbReference type="HOGENOM" id="CLU_013748_1_2_1"/>
<dbReference type="OrthoDB" id="3236at5206"/>
<dbReference type="UniPathway" id="UPA00047">
    <property type="reaction ID" value="UER00055"/>
</dbReference>
<dbReference type="UniPathway" id="UPA00049">
    <property type="reaction ID" value="UER00059"/>
</dbReference>
<dbReference type="PHI-base" id="PHI:358"/>
<dbReference type="Proteomes" id="UP000010091">
    <property type="component" value="Chromosome 1"/>
</dbReference>
<dbReference type="GO" id="GO:0005948">
    <property type="term" value="C:acetolactate synthase complex"/>
    <property type="evidence" value="ECO:0007669"/>
    <property type="project" value="EnsemblFungi"/>
</dbReference>
<dbReference type="GO" id="GO:0005739">
    <property type="term" value="C:mitochondrion"/>
    <property type="evidence" value="ECO:0007669"/>
    <property type="project" value="UniProtKB-SubCell"/>
</dbReference>
<dbReference type="GO" id="GO:0003984">
    <property type="term" value="F:acetolactate synthase activity"/>
    <property type="evidence" value="ECO:0007669"/>
    <property type="project" value="UniProtKB-EC"/>
</dbReference>
<dbReference type="GO" id="GO:0050660">
    <property type="term" value="F:flavin adenine dinucleotide binding"/>
    <property type="evidence" value="ECO:0007669"/>
    <property type="project" value="EnsemblFungi"/>
</dbReference>
<dbReference type="GO" id="GO:0000287">
    <property type="term" value="F:magnesium ion binding"/>
    <property type="evidence" value="ECO:0007669"/>
    <property type="project" value="InterPro"/>
</dbReference>
<dbReference type="GO" id="GO:0030976">
    <property type="term" value="F:thiamine pyrophosphate binding"/>
    <property type="evidence" value="ECO:0007669"/>
    <property type="project" value="InterPro"/>
</dbReference>
<dbReference type="GO" id="GO:0009097">
    <property type="term" value="P:isoleucine biosynthetic process"/>
    <property type="evidence" value="ECO:0007669"/>
    <property type="project" value="UniProtKB-UniPathway"/>
</dbReference>
<dbReference type="GO" id="GO:0009099">
    <property type="term" value="P:L-valine biosynthetic process"/>
    <property type="evidence" value="ECO:0007669"/>
    <property type="project" value="UniProtKB-UniPathway"/>
</dbReference>
<dbReference type="CDD" id="cd02015">
    <property type="entry name" value="TPP_AHAS"/>
    <property type="match status" value="1"/>
</dbReference>
<dbReference type="CDD" id="cd07035">
    <property type="entry name" value="TPP_PYR_POX_like"/>
    <property type="match status" value="1"/>
</dbReference>
<dbReference type="FunFam" id="3.40.50.1220:FF:000008">
    <property type="entry name" value="Acetolactate synthase"/>
    <property type="match status" value="1"/>
</dbReference>
<dbReference type="FunFam" id="3.40.50.970:FF:000007">
    <property type="entry name" value="Acetolactate synthase"/>
    <property type="match status" value="1"/>
</dbReference>
<dbReference type="Gene3D" id="3.40.50.970">
    <property type="match status" value="2"/>
</dbReference>
<dbReference type="Gene3D" id="3.40.50.1220">
    <property type="entry name" value="TPP-binding domain"/>
    <property type="match status" value="1"/>
</dbReference>
<dbReference type="InterPro" id="IPR012846">
    <property type="entry name" value="Acetolactate_synth_lsu"/>
</dbReference>
<dbReference type="InterPro" id="IPR039368">
    <property type="entry name" value="AHAS_TPP"/>
</dbReference>
<dbReference type="InterPro" id="IPR029035">
    <property type="entry name" value="DHS-like_NAD/FAD-binding_dom"/>
</dbReference>
<dbReference type="InterPro" id="IPR029061">
    <property type="entry name" value="THDP-binding"/>
</dbReference>
<dbReference type="InterPro" id="IPR012000">
    <property type="entry name" value="Thiamin_PyroP_enz_cen_dom"/>
</dbReference>
<dbReference type="InterPro" id="IPR012001">
    <property type="entry name" value="Thiamin_PyroP_enz_TPP-bd_dom"/>
</dbReference>
<dbReference type="InterPro" id="IPR000399">
    <property type="entry name" value="TPP-bd_CS"/>
</dbReference>
<dbReference type="InterPro" id="IPR045229">
    <property type="entry name" value="TPP_enz"/>
</dbReference>
<dbReference type="InterPro" id="IPR011766">
    <property type="entry name" value="TPP_enzyme_TPP-bd"/>
</dbReference>
<dbReference type="NCBIfam" id="TIGR00118">
    <property type="entry name" value="acolac_lg"/>
    <property type="match status" value="1"/>
</dbReference>
<dbReference type="PANTHER" id="PTHR18968:SF13">
    <property type="entry name" value="ACETOLACTATE SYNTHASE CATALYTIC SUBUNIT, MITOCHONDRIAL"/>
    <property type="match status" value="1"/>
</dbReference>
<dbReference type="PANTHER" id="PTHR18968">
    <property type="entry name" value="THIAMINE PYROPHOSPHATE ENZYMES"/>
    <property type="match status" value="1"/>
</dbReference>
<dbReference type="Pfam" id="PF02775">
    <property type="entry name" value="TPP_enzyme_C"/>
    <property type="match status" value="1"/>
</dbReference>
<dbReference type="Pfam" id="PF00205">
    <property type="entry name" value="TPP_enzyme_M"/>
    <property type="match status" value="1"/>
</dbReference>
<dbReference type="Pfam" id="PF02776">
    <property type="entry name" value="TPP_enzyme_N"/>
    <property type="match status" value="1"/>
</dbReference>
<dbReference type="SUPFAM" id="SSF52467">
    <property type="entry name" value="DHS-like NAD/FAD-binding domain"/>
    <property type="match status" value="1"/>
</dbReference>
<dbReference type="SUPFAM" id="SSF52518">
    <property type="entry name" value="Thiamin diphosphate-binding fold (THDP-binding)"/>
    <property type="match status" value="2"/>
</dbReference>
<dbReference type="PROSITE" id="PS00187">
    <property type="entry name" value="TPP_ENZYMES"/>
    <property type="match status" value="1"/>
</dbReference>
<name>ILVB_CRYNH</name>
<comment type="catalytic activity">
    <reaction>
        <text>2 pyruvate + H(+) = (2S)-2-acetolactate + CO2</text>
        <dbReference type="Rhea" id="RHEA:25249"/>
        <dbReference type="ChEBI" id="CHEBI:15361"/>
        <dbReference type="ChEBI" id="CHEBI:15378"/>
        <dbReference type="ChEBI" id="CHEBI:16526"/>
        <dbReference type="ChEBI" id="CHEBI:58476"/>
        <dbReference type="EC" id="2.2.1.6"/>
    </reaction>
</comment>
<comment type="cofactor">
    <cofactor evidence="1">
        <name>Mg(2+)</name>
        <dbReference type="ChEBI" id="CHEBI:18420"/>
    </cofactor>
    <text evidence="1">Binds 1 Mg(2+) ion per subunit.</text>
</comment>
<comment type="cofactor">
    <cofactor evidence="1">
        <name>thiamine diphosphate</name>
        <dbReference type="ChEBI" id="CHEBI:58937"/>
    </cofactor>
    <text evidence="1">Binds 1 thiamine pyrophosphate per subunit.</text>
</comment>
<comment type="pathway">
    <text>Amino-acid biosynthesis; L-isoleucine biosynthesis; L-isoleucine from 2-oxobutanoate: step 1/4.</text>
</comment>
<comment type="pathway">
    <text>Amino-acid biosynthesis; L-valine biosynthesis; L-valine from pyruvate: step 1/4.</text>
</comment>
<comment type="subcellular location">
    <subcellularLocation>
        <location evidence="1">Mitochondrion</location>
    </subcellularLocation>
</comment>
<comment type="similarity">
    <text evidence="4">Belongs to the TPP enzyme family.</text>
</comment>
<reference key="1">
    <citation type="journal article" date="2004" name="Microbiology">
        <title>Cryptococcus neoformans Ilv2p confers resistance to sulfometuron methyl and is required for survival at 37 degrees C and in vivo.</title>
        <authorList>
            <person name="Kingsbury J.M."/>
            <person name="Yang Z."/>
            <person name="Ganous T.M."/>
            <person name="Cox G.M."/>
            <person name="McCusker J.H."/>
        </authorList>
    </citation>
    <scope>NUCLEOTIDE SEQUENCE [GENOMIC DNA]</scope>
    <source>
        <strain>H99 / ATCC 208821 / CBS 10515 / FGSC 9487</strain>
    </source>
</reference>
<reference key="2">
    <citation type="journal article" date="2014" name="PLoS Genet.">
        <title>Analysis of the genome and transcriptome of Cryptococcus neoformans var. grubii reveals complex RNA expression and microevolution leading to virulence attenuation.</title>
        <authorList>
            <person name="Janbon G."/>
            <person name="Ormerod K.L."/>
            <person name="Paulet D."/>
            <person name="Byrnes E.J. III"/>
            <person name="Yadav V."/>
            <person name="Chatterjee G."/>
            <person name="Mullapudi N."/>
            <person name="Hon C.-C."/>
            <person name="Billmyre R.B."/>
            <person name="Brunel F."/>
            <person name="Bahn Y.-S."/>
            <person name="Chen W."/>
            <person name="Chen Y."/>
            <person name="Chow E.W.L."/>
            <person name="Coppee J.-Y."/>
            <person name="Floyd-Averette A."/>
            <person name="Gaillardin C."/>
            <person name="Gerik K.J."/>
            <person name="Goldberg J."/>
            <person name="Gonzalez-Hilarion S."/>
            <person name="Gujja S."/>
            <person name="Hamlin J.L."/>
            <person name="Hsueh Y.-P."/>
            <person name="Ianiri G."/>
            <person name="Jones S."/>
            <person name="Kodira C.D."/>
            <person name="Kozubowski L."/>
            <person name="Lam W."/>
            <person name="Marra M."/>
            <person name="Mesner L.D."/>
            <person name="Mieczkowski P.A."/>
            <person name="Moyrand F."/>
            <person name="Nielsen K."/>
            <person name="Proux C."/>
            <person name="Rossignol T."/>
            <person name="Schein J.E."/>
            <person name="Sun S."/>
            <person name="Wollschlaeger C."/>
            <person name="Wood I.A."/>
            <person name="Zeng Q."/>
            <person name="Neuveglise C."/>
            <person name="Newlon C.S."/>
            <person name="Perfect J.R."/>
            <person name="Lodge J.K."/>
            <person name="Idnurm A."/>
            <person name="Stajich J.E."/>
            <person name="Kronstad J.W."/>
            <person name="Sanyal K."/>
            <person name="Heitman J."/>
            <person name="Fraser J.A."/>
            <person name="Cuomo C.A."/>
            <person name="Dietrich F.S."/>
        </authorList>
    </citation>
    <scope>NUCLEOTIDE SEQUENCE [LARGE SCALE GENOMIC DNA]</scope>
    <source>
        <strain>H99 / ATCC 208821 / CBS 10515 / FGSC 9487</strain>
    </source>
</reference>
<organism>
    <name type="scientific">Cryptococcus neoformans var. grubii serotype A (strain H99 / ATCC 208821 / CBS 10515 / FGSC 9487)</name>
    <name type="common">Filobasidiella neoformans var. grubii</name>
    <dbReference type="NCBI Taxonomy" id="235443"/>
    <lineage>
        <taxon>Eukaryota</taxon>
        <taxon>Fungi</taxon>
        <taxon>Dikarya</taxon>
        <taxon>Basidiomycota</taxon>
        <taxon>Agaricomycotina</taxon>
        <taxon>Tremellomycetes</taxon>
        <taxon>Tremellales</taxon>
        <taxon>Cryptococcaceae</taxon>
        <taxon>Cryptococcus</taxon>
        <taxon>Cryptococcus neoformans species complex</taxon>
    </lineage>
</organism>
<accession>Q6SSJ3</accession>
<accession>J9VGF8</accession>
<evidence type="ECO:0000250" key="1"/>
<evidence type="ECO:0000255" key="2"/>
<evidence type="ECO:0000256" key="3">
    <source>
        <dbReference type="SAM" id="MobiDB-lite"/>
    </source>
</evidence>
<evidence type="ECO:0000305" key="4"/>
<sequence length="718" mass="78497">MLTRQARLLRRIPPPNAVLQSGLQRRHRSTDRYSNNIHTSSTQNAPAPVYDTPIREKGMTLEAKERVRAHVRKIQSSASTAAASPAVRPQPAQHFQAAPQPMPTNMPRFESDSQVKNGLDYSFIGLSGGQIFQEMMLRHDVKQVFGYPGGAILPVFDAIYNSPHFEFVLPRHEQGAGHMAEGYARVSGKPGVVLVTSGPGATNVITPMQDALSDGVPMVVFCGQVATNLIGSDAFQEADVVGISRSCTKWNVMVKDIAELPRRINEAFKIATTGRPGPVLVDLPKDVTAAILRTPIPAKSVQPGHSPYLPSNPLNPSSQPSDPLPGDADLITEAAQMINKAKRPIIFAGNGVLSSPEGPKLLKELSDKGRIPVTTTLQGLGAFDERDEKSLHMIGMHGSAYANFAMQEADVLIALGVRFDDRVTGKVDTFAPAAKAAAAEGRGGIIHFEIQPKNINKIVEAQIPVLGDVVASLGELVPQIEAVDRSAWIGRCKATKERYPFTYTPSQEGQKLKPQEVVQELDRQAEALGKEKFVISTGVGQHQMWACQYYRWTEPRSWVSSGGLGTMGFGLPSAIGAKVAAPEKYVIDIDGDASFSMTAMELATASQYDIGVKVLLFNNEFQGMVEQWQDLFYENRYSHTRMTNPDFVKLSESMGAKGLRCTKLEDLPRMMKEFLEYDGKRPIVLECLVSSEHVYPMIPAGKALHEQLLHPLLRNGSE</sequence>
<feature type="transit peptide" description="Mitochondrion" evidence="2">
    <location>
        <begin position="1"/>
        <end status="unknown"/>
    </location>
</feature>
<feature type="chain" id="PRO_0000035662" description="Acetolactate synthase, mitochondrial">
    <location>
        <begin status="unknown"/>
        <end position="718"/>
    </location>
</feature>
<feature type="region of interest" description="Disordered" evidence="3">
    <location>
        <begin position="1"/>
        <end position="53"/>
    </location>
</feature>
<feature type="region of interest" description="Disordered" evidence="3">
    <location>
        <begin position="75"/>
        <end position="99"/>
    </location>
</feature>
<feature type="region of interest" description="Disordered" evidence="3">
    <location>
        <begin position="301"/>
        <end position="326"/>
    </location>
</feature>
<feature type="region of interest" description="Thiamine pyrophosphate binding">
    <location>
        <begin position="541"/>
        <end position="621"/>
    </location>
</feature>
<feature type="compositionally biased region" description="Polar residues" evidence="3">
    <location>
        <begin position="32"/>
        <end position="45"/>
    </location>
</feature>
<feature type="compositionally biased region" description="Low complexity" evidence="3">
    <location>
        <begin position="76"/>
        <end position="99"/>
    </location>
</feature>
<feature type="compositionally biased region" description="Low complexity" evidence="3">
    <location>
        <begin position="306"/>
        <end position="325"/>
    </location>
</feature>
<feature type="binding site" evidence="1">
    <location>
        <position position="173"/>
    </location>
    <ligand>
        <name>thiamine diphosphate</name>
        <dbReference type="ChEBI" id="CHEBI:58937"/>
    </ligand>
</feature>
<feature type="binding site" evidence="1">
    <location>
        <position position="275"/>
    </location>
    <ligand>
        <name>FAD</name>
        <dbReference type="ChEBI" id="CHEBI:57692"/>
    </ligand>
</feature>
<feature type="binding site" evidence="1">
    <location>
        <begin position="397"/>
        <end position="418"/>
    </location>
    <ligand>
        <name>FAD</name>
        <dbReference type="ChEBI" id="CHEBI:57692"/>
    </ligand>
</feature>
<feature type="binding site" evidence="1">
    <location>
        <begin position="449"/>
        <end position="468"/>
    </location>
    <ligand>
        <name>FAD</name>
        <dbReference type="ChEBI" id="CHEBI:57692"/>
    </ligand>
</feature>
<feature type="binding site" evidence="1">
    <location>
        <position position="592"/>
    </location>
    <ligand>
        <name>Mg(2+)</name>
        <dbReference type="ChEBI" id="CHEBI:18420"/>
    </ligand>
</feature>
<feature type="binding site" evidence="1">
    <location>
        <position position="619"/>
    </location>
    <ligand>
        <name>Mg(2+)</name>
        <dbReference type="ChEBI" id="CHEBI:18420"/>
    </ligand>
</feature>
<gene>
    <name type="primary">ILV2</name>
    <name type="ORF">CNAG_00268</name>
</gene>